<reference key="1">
    <citation type="submission" date="2008-05" db="EMBL/GenBank/DDBJ databases">
        <title>Complete sequence of Rhodopseudomonas palustris TIE-1.</title>
        <authorList>
            <consortium name="US DOE Joint Genome Institute"/>
            <person name="Lucas S."/>
            <person name="Copeland A."/>
            <person name="Lapidus A."/>
            <person name="Glavina del Rio T."/>
            <person name="Dalin E."/>
            <person name="Tice H."/>
            <person name="Pitluck S."/>
            <person name="Chain P."/>
            <person name="Malfatti S."/>
            <person name="Shin M."/>
            <person name="Vergez L."/>
            <person name="Lang D."/>
            <person name="Schmutz J."/>
            <person name="Larimer F."/>
            <person name="Land M."/>
            <person name="Hauser L."/>
            <person name="Kyrpides N."/>
            <person name="Mikhailova N."/>
            <person name="Emerson D."/>
            <person name="Newman D.K."/>
            <person name="Roden E."/>
            <person name="Richardson P."/>
        </authorList>
    </citation>
    <scope>NUCLEOTIDE SEQUENCE [LARGE SCALE GENOMIC DNA]</scope>
    <source>
        <strain>TIE-1</strain>
    </source>
</reference>
<dbReference type="EC" id="2.7.8.7" evidence="1"/>
<dbReference type="EMBL" id="CP001096">
    <property type="protein sequence ID" value="ACF01478.1"/>
    <property type="molecule type" value="Genomic_DNA"/>
</dbReference>
<dbReference type="RefSeq" id="WP_012496120.1">
    <property type="nucleotide sequence ID" value="NC_011004.1"/>
</dbReference>
<dbReference type="SMR" id="B3QJH2"/>
<dbReference type="KEGG" id="rpt:Rpal_2970"/>
<dbReference type="HOGENOM" id="CLU_089696_0_2_5"/>
<dbReference type="OrthoDB" id="517356at2"/>
<dbReference type="Proteomes" id="UP000001725">
    <property type="component" value="Chromosome"/>
</dbReference>
<dbReference type="GO" id="GO:0005737">
    <property type="term" value="C:cytoplasm"/>
    <property type="evidence" value="ECO:0007669"/>
    <property type="project" value="UniProtKB-SubCell"/>
</dbReference>
<dbReference type="GO" id="GO:0008897">
    <property type="term" value="F:holo-[acyl-carrier-protein] synthase activity"/>
    <property type="evidence" value="ECO:0007669"/>
    <property type="project" value="UniProtKB-UniRule"/>
</dbReference>
<dbReference type="GO" id="GO:0000287">
    <property type="term" value="F:magnesium ion binding"/>
    <property type="evidence" value="ECO:0007669"/>
    <property type="project" value="UniProtKB-UniRule"/>
</dbReference>
<dbReference type="GO" id="GO:0006633">
    <property type="term" value="P:fatty acid biosynthetic process"/>
    <property type="evidence" value="ECO:0007669"/>
    <property type="project" value="UniProtKB-UniRule"/>
</dbReference>
<dbReference type="Gene3D" id="3.90.470.20">
    <property type="entry name" value="4'-phosphopantetheinyl transferase domain"/>
    <property type="match status" value="1"/>
</dbReference>
<dbReference type="HAMAP" id="MF_00101">
    <property type="entry name" value="AcpS"/>
    <property type="match status" value="1"/>
</dbReference>
<dbReference type="InterPro" id="IPR008278">
    <property type="entry name" value="4-PPantetheinyl_Trfase_dom"/>
</dbReference>
<dbReference type="InterPro" id="IPR037143">
    <property type="entry name" value="4-PPantetheinyl_Trfase_dom_sf"/>
</dbReference>
<dbReference type="InterPro" id="IPR002582">
    <property type="entry name" value="ACPS"/>
</dbReference>
<dbReference type="InterPro" id="IPR004568">
    <property type="entry name" value="Ppantetheine-prot_Trfase_dom"/>
</dbReference>
<dbReference type="NCBIfam" id="TIGR00516">
    <property type="entry name" value="acpS"/>
    <property type="match status" value="1"/>
</dbReference>
<dbReference type="NCBIfam" id="TIGR00556">
    <property type="entry name" value="pantethn_trn"/>
    <property type="match status" value="1"/>
</dbReference>
<dbReference type="Pfam" id="PF01648">
    <property type="entry name" value="ACPS"/>
    <property type="match status" value="1"/>
</dbReference>
<dbReference type="SUPFAM" id="SSF56214">
    <property type="entry name" value="4'-phosphopantetheinyl transferase"/>
    <property type="match status" value="1"/>
</dbReference>
<name>ACPS_RHOPT</name>
<comment type="function">
    <text evidence="1">Transfers the 4'-phosphopantetheine moiety from coenzyme A to a Ser of acyl-carrier-protein.</text>
</comment>
<comment type="catalytic activity">
    <reaction evidence="1">
        <text>apo-[ACP] + CoA = holo-[ACP] + adenosine 3',5'-bisphosphate + H(+)</text>
        <dbReference type="Rhea" id="RHEA:12068"/>
        <dbReference type="Rhea" id="RHEA-COMP:9685"/>
        <dbReference type="Rhea" id="RHEA-COMP:9690"/>
        <dbReference type="ChEBI" id="CHEBI:15378"/>
        <dbReference type="ChEBI" id="CHEBI:29999"/>
        <dbReference type="ChEBI" id="CHEBI:57287"/>
        <dbReference type="ChEBI" id="CHEBI:58343"/>
        <dbReference type="ChEBI" id="CHEBI:64479"/>
        <dbReference type="EC" id="2.7.8.7"/>
    </reaction>
</comment>
<comment type="cofactor">
    <cofactor evidence="1">
        <name>Mg(2+)</name>
        <dbReference type="ChEBI" id="CHEBI:18420"/>
    </cofactor>
</comment>
<comment type="subcellular location">
    <subcellularLocation>
        <location evidence="1">Cytoplasm</location>
    </subcellularLocation>
</comment>
<comment type="similarity">
    <text evidence="1">Belongs to the P-Pant transferase superfamily. AcpS family.</text>
</comment>
<sequence>MIIGIGSDLIDITRIAKVIERHGERFLDRVFTEAERAKAERRAKKSELVAATYAKRFAAKEACSKALGTGIRQGVWWRDMGVVNLPGGRPTMVLTGGAKTRLDALTPPGMTARIDLSITDEWPLAQAFVVISAVQAAAEQAGATSS</sequence>
<organism>
    <name type="scientific">Rhodopseudomonas palustris (strain TIE-1)</name>
    <dbReference type="NCBI Taxonomy" id="395960"/>
    <lineage>
        <taxon>Bacteria</taxon>
        <taxon>Pseudomonadati</taxon>
        <taxon>Pseudomonadota</taxon>
        <taxon>Alphaproteobacteria</taxon>
        <taxon>Hyphomicrobiales</taxon>
        <taxon>Nitrobacteraceae</taxon>
        <taxon>Rhodopseudomonas</taxon>
    </lineage>
</organism>
<gene>
    <name evidence="1" type="primary">acpS</name>
    <name type="ordered locus">Rpal_2970</name>
</gene>
<proteinExistence type="inferred from homology"/>
<accession>B3QJH2</accession>
<evidence type="ECO:0000255" key="1">
    <source>
        <dbReference type="HAMAP-Rule" id="MF_00101"/>
    </source>
</evidence>
<keyword id="KW-0963">Cytoplasm</keyword>
<keyword id="KW-0275">Fatty acid biosynthesis</keyword>
<keyword id="KW-0276">Fatty acid metabolism</keyword>
<keyword id="KW-0444">Lipid biosynthesis</keyword>
<keyword id="KW-0443">Lipid metabolism</keyword>
<keyword id="KW-0460">Magnesium</keyword>
<keyword id="KW-0479">Metal-binding</keyword>
<keyword id="KW-0808">Transferase</keyword>
<feature type="chain" id="PRO_1000093909" description="Holo-[acyl-carrier-protein] synthase">
    <location>
        <begin position="1"/>
        <end position="146"/>
    </location>
</feature>
<feature type="binding site" evidence="1">
    <location>
        <position position="8"/>
    </location>
    <ligand>
        <name>Mg(2+)</name>
        <dbReference type="ChEBI" id="CHEBI:18420"/>
    </ligand>
</feature>
<feature type="binding site" evidence="1">
    <location>
        <position position="61"/>
    </location>
    <ligand>
        <name>Mg(2+)</name>
        <dbReference type="ChEBI" id="CHEBI:18420"/>
    </ligand>
</feature>
<protein>
    <recommendedName>
        <fullName evidence="1">Holo-[acyl-carrier-protein] synthase</fullName>
        <shortName evidence="1">Holo-ACP synthase</shortName>
        <ecNumber evidence="1">2.7.8.7</ecNumber>
    </recommendedName>
    <alternativeName>
        <fullName evidence="1">4'-phosphopantetheinyl transferase AcpS</fullName>
    </alternativeName>
</protein>